<sequence length="377" mass="42474">MGNILRCFKGDDDGGDHYPYYKPTSRPHYQPPHYHGQPAAPPAPPQQQPLGPHGVTPSTVGVAALAHDLLNFESTSMVPDGLSQHVVSSRKAQVKWYQKLLEAYKNTTPPPKTPADAAQLIARALNMIQRADLEITSNYVSPQGILEFYNFPIPSLPSASSNYQPSSLPEGVQFVLNTLPVYDKCIGDGDGFTAYVSTTDPRESANVPLEVHELVIARTQARKCRDYQSADALLSSLDEAGYKIISCSDDEVLARKYRIRMRGIDAPELKMPYGRESRNALVKLIGGKSVKIYVYDLDQFGRYVGDIYCNNLFIQEQMLKNGHAWHFKTYDKRPEFARWEREAKAANRGLWASGNPEKPWDWRRDQRNARQDAIQVY</sequence>
<name>CAN3_ORYSJ</name>
<reference key="1">
    <citation type="journal article" date="2005" name="BMC Biol.">
        <title>The sequence of rice chromosomes 11 and 12, rich in disease resistance genes and recent gene duplications.</title>
        <authorList>
            <consortium name="The rice chromosomes 11 and 12 sequencing consortia"/>
        </authorList>
    </citation>
    <scope>NUCLEOTIDE SEQUENCE [LARGE SCALE GENOMIC DNA]</scope>
    <source>
        <strain>cv. Nipponbare</strain>
    </source>
</reference>
<reference key="2">
    <citation type="journal article" date="2005" name="Nature">
        <title>The map-based sequence of the rice genome.</title>
        <authorList>
            <consortium name="International rice genome sequencing project (IRGSP)"/>
        </authorList>
    </citation>
    <scope>NUCLEOTIDE SEQUENCE [LARGE SCALE GENOMIC DNA]</scope>
    <source>
        <strain>cv. Nipponbare</strain>
    </source>
</reference>
<reference key="3">
    <citation type="journal article" date="2008" name="Nucleic Acids Res.">
        <title>The rice annotation project database (RAP-DB): 2008 update.</title>
        <authorList>
            <consortium name="The rice annotation project (RAP)"/>
        </authorList>
    </citation>
    <scope>GENOME REANNOTATION</scope>
    <source>
        <strain>cv. Nipponbare</strain>
    </source>
</reference>
<reference key="4">
    <citation type="journal article" date="2013" name="Rice">
        <title>Improvement of the Oryza sativa Nipponbare reference genome using next generation sequence and optical map data.</title>
        <authorList>
            <person name="Kawahara Y."/>
            <person name="de la Bastide M."/>
            <person name="Hamilton J.P."/>
            <person name="Kanamori H."/>
            <person name="McCombie W.R."/>
            <person name="Ouyang S."/>
            <person name="Schwartz D.C."/>
            <person name="Tanaka T."/>
            <person name="Wu J."/>
            <person name="Zhou S."/>
            <person name="Childs K.L."/>
            <person name="Davidson R.M."/>
            <person name="Lin H."/>
            <person name="Quesada-Ocampo L."/>
            <person name="Vaillancourt B."/>
            <person name="Sakai H."/>
            <person name="Lee S.S."/>
            <person name="Kim J."/>
            <person name="Numa H."/>
            <person name="Itoh T."/>
            <person name="Buell C.R."/>
            <person name="Matsumoto T."/>
        </authorList>
    </citation>
    <scope>GENOME REANNOTATION</scope>
    <source>
        <strain>cv. Nipponbare</strain>
    </source>
</reference>
<reference key="5">
    <citation type="journal article" date="2003" name="Science">
        <title>Collection, mapping, and annotation of over 28,000 cDNA clones from japonica rice.</title>
        <authorList>
            <consortium name="The rice full-length cDNA consortium"/>
        </authorList>
    </citation>
    <scope>NUCLEOTIDE SEQUENCE [LARGE SCALE MRNA]</scope>
    <source>
        <strain>cv. Nipponbare</strain>
    </source>
</reference>
<proteinExistence type="evidence at transcript level"/>
<comment type="function">
    <text evidence="1">Enzyme that catalyzes the hydrolysis of both DNA and RNA at the 5' position of the phosphodiester bond.</text>
</comment>
<comment type="cofactor">
    <cofactor evidence="1">
        <name>Ca(2+)</name>
        <dbReference type="ChEBI" id="CHEBI:29108"/>
    </cofactor>
    <text evidence="1">Binds 1 Ca(2+) ion per subunit.</text>
</comment>
<comment type="subcellular location">
    <subcellularLocation>
        <location evidence="5">Cell membrane</location>
        <topology evidence="5">Lipid-anchor</topology>
    </subcellularLocation>
</comment>
<comment type="similarity">
    <text evidence="3">Belongs to the thermonuclease family.</text>
</comment>
<comment type="sequence caution" evidence="5">
    <conflict type="erroneous gene model prediction">
        <sequence resource="EMBL-CDS" id="ABA96197"/>
    </conflict>
</comment>
<comment type="sequence caution" evidence="5">
    <conflict type="miscellaneous discrepancy">
        <sequence resource="EMBL-CDS" id="BAG96050"/>
    </conflict>
    <text>Sequencing errors.</text>
</comment>
<comment type="sequence caution" evidence="5">
    <conflict type="erroneous gene model prediction">
        <sequence resource="EMBL-CDS" id="BAH95483"/>
    </conflict>
</comment>
<evidence type="ECO:0000250" key="1"/>
<evidence type="ECO:0000255" key="2"/>
<evidence type="ECO:0000255" key="3">
    <source>
        <dbReference type="PROSITE-ProRule" id="PRU00272"/>
    </source>
</evidence>
<evidence type="ECO:0000256" key="4">
    <source>
        <dbReference type="SAM" id="MobiDB-lite"/>
    </source>
</evidence>
<evidence type="ECO:0000305" key="5"/>
<protein>
    <recommendedName>
        <fullName>Probable staphylococcal-like nuclease CAN3</fullName>
        <ecNumber>3.1.31.-</ecNumber>
    </recommendedName>
    <alternativeName>
        <fullName>Calcium-dependent nuclease 3</fullName>
        <shortName>Ca(2+)-dependent nuclease 3</shortName>
    </alternativeName>
</protein>
<accession>Q2QYR1</accession>
<accession>C7JA21</accession>
<organism>
    <name type="scientific">Oryza sativa subsp. japonica</name>
    <name type="common">Rice</name>
    <dbReference type="NCBI Taxonomy" id="39947"/>
    <lineage>
        <taxon>Eukaryota</taxon>
        <taxon>Viridiplantae</taxon>
        <taxon>Streptophyta</taxon>
        <taxon>Embryophyta</taxon>
        <taxon>Tracheophyta</taxon>
        <taxon>Spermatophyta</taxon>
        <taxon>Magnoliopsida</taxon>
        <taxon>Liliopsida</taxon>
        <taxon>Poales</taxon>
        <taxon>Poaceae</taxon>
        <taxon>BOP clade</taxon>
        <taxon>Oryzoideae</taxon>
        <taxon>Oryzeae</taxon>
        <taxon>Oryzinae</taxon>
        <taxon>Oryza</taxon>
        <taxon>Oryza sativa</taxon>
    </lineage>
</organism>
<gene>
    <name type="ordered locus">Os12g0109200</name>
    <name type="ordered locus">LOC_Os12g01830</name>
    <name type="ORF">OSJNBa0024J08</name>
</gene>
<keyword id="KW-0106">Calcium</keyword>
<keyword id="KW-1003">Cell membrane</keyword>
<keyword id="KW-0255">Endonuclease</keyword>
<keyword id="KW-0378">Hydrolase</keyword>
<keyword id="KW-0449">Lipoprotein</keyword>
<keyword id="KW-0472">Membrane</keyword>
<keyword id="KW-0479">Metal-binding</keyword>
<keyword id="KW-0519">Myristate</keyword>
<keyword id="KW-0540">Nuclease</keyword>
<keyword id="KW-0564">Palmitate</keyword>
<keyword id="KW-1185">Reference proteome</keyword>
<feature type="initiator methionine" description="Removed" evidence="2">
    <location>
        <position position="1"/>
    </location>
</feature>
<feature type="chain" id="PRO_0000430202" description="Probable staphylococcal-like nuclease CAN3">
    <location>
        <begin position="2"/>
        <end position="377"/>
    </location>
</feature>
<feature type="domain" description="TNase-like" evidence="3">
    <location>
        <begin position="177"/>
        <end position="353"/>
    </location>
</feature>
<feature type="region of interest" description="Disordered" evidence="4">
    <location>
        <begin position="15"/>
        <end position="57"/>
    </location>
</feature>
<feature type="compositionally biased region" description="Low complexity" evidence="4">
    <location>
        <begin position="27"/>
        <end position="38"/>
    </location>
</feature>
<feature type="active site" evidence="3">
    <location>
        <position position="260"/>
    </location>
</feature>
<feature type="active site" evidence="3">
    <location>
        <position position="268"/>
    </location>
</feature>
<feature type="active site" evidence="3">
    <location>
        <position position="302"/>
    </location>
</feature>
<feature type="binding site" evidence="3">
    <location>
        <position position="190"/>
    </location>
    <ligand>
        <name>Ca(2+)</name>
        <dbReference type="ChEBI" id="CHEBI:29108"/>
    </ligand>
</feature>
<feature type="binding site" evidence="3">
    <location>
        <position position="265"/>
    </location>
    <ligand>
        <name>Ca(2+)</name>
        <dbReference type="ChEBI" id="CHEBI:29108"/>
    </ligand>
</feature>
<feature type="lipid moiety-binding region" description="N-myristoyl glycine" evidence="2">
    <location>
        <position position="2"/>
    </location>
</feature>
<feature type="lipid moiety-binding region" description="S-palmitoyl cysteine" evidence="2">
    <location>
        <position position="7"/>
    </location>
</feature>
<dbReference type="EC" id="3.1.31.-"/>
<dbReference type="EMBL" id="BX000492">
    <property type="status" value="NOT_ANNOTATED_CDS"/>
    <property type="molecule type" value="Genomic_DNA"/>
</dbReference>
<dbReference type="EMBL" id="DP000011">
    <property type="protein sequence ID" value="ABA96197.1"/>
    <property type="status" value="ALT_SEQ"/>
    <property type="molecule type" value="Genomic_DNA"/>
</dbReference>
<dbReference type="EMBL" id="AP008218">
    <property type="protein sequence ID" value="BAH95483.1"/>
    <property type="status" value="ALT_SEQ"/>
    <property type="molecule type" value="Genomic_DNA"/>
</dbReference>
<dbReference type="EMBL" id="AP014968">
    <property type="status" value="NOT_ANNOTATED_CDS"/>
    <property type="molecule type" value="Genomic_DNA"/>
</dbReference>
<dbReference type="EMBL" id="AK103380">
    <property type="protein sequence ID" value="BAG96050.1"/>
    <property type="status" value="ALT_SEQ"/>
    <property type="molecule type" value="mRNA"/>
</dbReference>
<dbReference type="RefSeq" id="XP_015618302.1">
    <property type="nucleotide sequence ID" value="XM_015762816.1"/>
</dbReference>
<dbReference type="SMR" id="Q2QYR1"/>
<dbReference type="FunCoup" id="Q2QYR1">
    <property type="interactions" value="2"/>
</dbReference>
<dbReference type="STRING" id="39947.Q2QYR1"/>
<dbReference type="PaxDb" id="39947-Q2QYR1"/>
<dbReference type="KEGG" id="dosa:Os12g0109200"/>
<dbReference type="InParanoid" id="Q2QYR1"/>
<dbReference type="OrthoDB" id="430293at2759"/>
<dbReference type="Proteomes" id="UP000000763">
    <property type="component" value="Chromosome 12"/>
</dbReference>
<dbReference type="Proteomes" id="UP000059680">
    <property type="component" value="Chromosome 12"/>
</dbReference>
<dbReference type="GO" id="GO:0005886">
    <property type="term" value="C:plasma membrane"/>
    <property type="evidence" value="ECO:0007669"/>
    <property type="project" value="UniProtKB-SubCell"/>
</dbReference>
<dbReference type="GO" id="GO:0004519">
    <property type="term" value="F:endonuclease activity"/>
    <property type="evidence" value="ECO:0007669"/>
    <property type="project" value="UniProtKB-KW"/>
</dbReference>
<dbReference type="GO" id="GO:0046872">
    <property type="term" value="F:metal ion binding"/>
    <property type="evidence" value="ECO:0007669"/>
    <property type="project" value="UniProtKB-KW"/>
</dbReference>
<dbReference type="Gene3D" id="2.40.50.90">
    <property type="match status" value="1"/>
</dbReference>
<dbReference type="Gene3D" id="1.20.120.1910">
    <property type="entry name" value="Cysteine-tRNA ligase, C-terminal anti-codon recognition domain"/>
    <property type="match status" value="1"/>
</dbReference>
<dbReference type="InterPro" id="IPR035437">
    <property type="entry name" value="SNase_OB-fold_sf"/>
</dbReference>
<dbReference type="InterPro" id="IPR016071">
    <property type="entry name" value="Staphylococal_nuclease_OB-fold"/>
</dbReference>
<dbReference type="PANTHER" id="PTHR12302">
    <property type="entry name" value="EBNA2 BINDING PROTEIN P100"/>
    <property type="match status" value="1"/>
</dbReference>
<dbReference type="PANTHER" id="PTHR12302:SF17">
    <property type="entry name" value="STAPHYLOCOCCAL-LIKE NUCLEASE CAN3-RELATED"/>
    <property type="match status" value="1"/>
</dbReference>
<dbReference type="Pfam" id="PF00565">
    <property type="entry name" value="SNase"/>
    <property type="match status" value="1"/>
</dbReference>
<dbReference type="SMART" id="SM00318">
    <property type="entry name" value="SNc"/>
    <property type="match status" value="1"/>
</dbReference>
<dbReference type="SUPFAM" id="SSF50199">
    <property type="entry name" value="Staphylococcal nuclease"/>
    <property type="match status" value="1"/>
</dbReference>
<dbReference type="PROSITE" id="PS50830">
    <property type="entry name" value="TNASE_3"/>
    <property type="match status" value="1"/>
</dbReference>